<comment type="function">
    <text evidence="1">F(1)F(0) ATP synthase produces ATP from ADP in the presence of a proton or sodium gradient. F-type ATPases consist of two structural domains, F(1) containing the extramembraneous catalytic core and F(0) containing the membrane proton channel, linked together by a central stalk and a peripheral stalk. During catalysis, ATP synthesis in the catalytic domain of F(1) is coupled via a rotary mechanism of the central stalk subunits to proton translocation.</text>
</comment>
<comment type="function">
    <text evidence="1">This protein is part of the stalk that links CF(0) to CF(1). It either transmits conformational changes from CF(0) to CF(1) or is implicated in proton conduction.</text>
</comment>
<comment type="subunit">
    <text evidence="1">F-type ATPases have 2 components, F(1) - the catalytic core - and F(0) - the membrane proton channel. F(1) has five subunits: alpha(3), beta(3), gamma(1), delta(1), epsilon(1). F(0) has three main subunits: a(1), b(2) and c(10-14). The alpha and beta chains form an alternating ring which encloses part of the gamma chain. F(1) is attached to F(0) by a central stalk formed by the gamma and epsilon chains, while a peripheral stalk is formed by the delta and b chains.</text>
</comment>
<comment type="subcellular location">
    <subcellularLocation>
        <location evidence="1">Cell inner membrane</location>
        <topology evidence="1">Peripheral membrane protein</topology>
    </subcellularLocation>
</comment>
<comment type="similarity">
    <text evidence="1">Belongs to the ATPase delta chain family.</text>
</comment>
<protein>
    <recommendedName>
        <fullName evidence="1">ATP synthase subunit delta</fullName>
    </recommendedName>
    <alternativeName>
        <fullName evidence="1">ATP synthase F(1) sector subunit delta</fullName>
    </alternativeName>
    <alternativeName>
        <fullName evidence="1">F-type ATPase subunit delta</fullName>
        <shortName evidence="1">F-ATPase subunit delta</shortName>
    </alternativeName>
</protein>
<name>ATPD_PARD8</name>
<proteinExistence type="inferred from homology"/>
<reference key="1">
    <citation type="journal article" date="2007" name="PLoS Biol.">
        <title>Evolution of symbiotic bacteria in the distal human intestine.</title>
        <authorList>
            <person name="Xu J."/>
            <person name="Mahowald M.A."/>
            <person name="Ley R.E."/>
            <person name="Lozupone C.A."/>
            <person name="Hamady M."/>
            <person name="Martens E.C."/>
            <person name="Henrissat B."/>
            <person name="Coutinho P.M."/>
            <person name="Minx P."/>
            <person name="Latreille P."/>
            <person name="Cordum H."/>
            <person name="Van Brunt A."/>
            <person name="Kim K."/>
            <person name="Fulton R.S."/>
            <person name="Fulton L.A."/>
            <person name="Clifton S.W."/>
            <person name="Wilson R.K."/>
            <person name="Knight R.D."/>
            <person name="Gordon J.I."/>
        </authorList>
    </citation>
    <scope>NUCLEOTIDE SEQUENCE [LARGE SCALE GENOMIC DNA]</scope>
    <source>
        <strain>ATCC 8503 / DSM 20701 / CIP 104284 / JCM 5825 / NCTC 11152</strain>
    </source>
</reference>
<gene>
    <name evidence="1" type="primary">atpH</name>
    <name type="ordered locus">BDI_0265</name>
</gene>
<dbReference type="EMBL" id="CP000140">
    <property type="protein sequence ID" value="ABR42050.1"/>
    <property type="molecule type" value="Genomic_DNA"/>
</dbReference>
<dbReference type="RefSeq" id="WP_011965942.1">
    <property type="nucleotide sequence ID" value="NC_009615.1"/>
</dbReference>
<dbReference type="SMR" id="A6L8N6"/>
<dbReference type="STRING" id="435591.BDI_0265"/>
<dbReference type="PaxDb" id="435591-BDI_0265"/>
<dbReference type="DNASU" id="5305420"/>
<dbReference type="KEGG" id="pdi:BDI_0265"/>
<dbReference type="eggNOG" id="COG0712">
    <property type="taxonomic scope" value="Bacteria"/>
</dbReference>
<dbReference type="HOGENOM" id="CLU_085114_4_0_10"/>
<dbReference type="BioCyc" id="PDIS435591:G1G5A-271-MONOMER"/>
<dbReference type="Proteomes" id="UP000000566">
    <property type="component" value="Chromosome"/>
</dbReference>
<dbReference type="GO" id="GO:0005886">
    <property type="term" value="C:plasma membrane"/>
    <property type="evidence" value="ECO:0007669"/>
    <property type="project" value="UniProtKB-SubCell"/>
</dbReference>
<dbReference type="GO" id="GO:0045259">
    <property type="term" value="C:proton-transporting ATP synthase complex"/>
    <property type="evidence" value="ECO:0007669"/>
    <property type="project" value="UniProtKB-KW"/>
</dbReference>
<dbReference type="GO" id="GO:0046933">
    <property type="term" value="F:proton-transporting ATP synthase activity, rotational mechanism"/>
    <property type="evidence" value="ECO:0007669"/>
    <property type="project" value="UniProtKB-UniRule"/>
</dbReference>
<dbReference type="Gene3D" id="1.10.520.20">
    <property type="entry name" value="N-terminal domain of the delta subunit of the F1F0-ATP synthase"/>
    <property type="match status" value="1"/>
</dbReference>
<dbReference type="HAMAP" id="MF_01416">
    <property type="entry name" value="ATP_synth_delta_bact"/>
    <property type="match status" value="1"/>
</dbReference>
<dbReference type="InterPro" id="IPR026015">
    <property type="entry name" value="ATP_synth_OSCP/delta_N_sf"/>
</dbReference>
<dbReference type="InterPro" id="IPR020781">
    <property type="entry name" value="ATPase_OSCP/d_CS"/>
</dbReference>
<dbReference type="InterPro" id="IPR000711">
    <property type="entry name" value="ATPase_OSCP/dsu"/>
</dbReference>
<dbReference type="NCBIfam" id="TIGR01145">
    <property type="entry name" value="ATP_synt_delta"/>
    <property type="match status" value="1"/>
</dbReference>
<dbReference type="NCBIfam" id="NF009964">
    <property type="entry name" value="PRK13429.1-3"/>
    <property type="match status" value="1"/>
</dbReference>
<dbReference type="PANTHER" id="PTHR11910">
    <property type="entry name" value="ATP SYNTHASE DELTA CHAIN"/>
    <property type="match status" value="1"/>
</dbReference>
<dbReference type="Pfam" id="PF00213">
    <property type="entry name" value="OSCP"/>
    <property type="match status" value="1"/>
</dbReference>
<dbReference type="PRINTS" id="PR00125">
    <property type="entry name" value="ATPASEDELTA"/>
</dbReference>
<dbReference type="SUPFAM" id="SSF47928">
    <property type="entry name" value="N-terminal domain of the delta subunit of the F1F0-ATP synthase"/>
    <property type="match status" value="1"/>
</dbReference>
<dbReference type="PROSITE" id="PS00389">
    <property type="entry name" value="ATPASE_DELTA"/>
    <property type="match status" value="1"/>
</dbReference>
<sequence length="180" mass="20501">MDIGTISSRYAKALFSLAKDKEQESRVYDDMKMLADSFSMEPELRGALSNPIVSVPEKVKLLTAAGGIEVCELYSRFINLVLAHKRETLLPFIAYIYIHLYRKEKKITRVRFDTAVAVDDAVKSHLQDKLRKETGCTIEFSGHVEPELIGGFRLRIGNYRIDASYATQLRDIRTGLLENR</sequence>
<accession>A6L8N6</accession>
<evidence type="ECO:0000255" key="1">
    <source>
        <dbReference type="HAMAP-Rule" id="MF_01416"/>
    </source>
</evidence>
<feature type="chain" id="PRO_0000371045" description="ATP synthase subunit delta">
    <location>
        <begin position="1"/>
        <end position="180"/>
    </location>
</feature>
<organism>
    <name type="scientific">Parabacteroides distasonis (strain ATCC 8503 / DSM 20701 / CIP 104284 / JCM 5825 / NCTC 11152)</name>
    <dbReference type="NCBI Taxonomy" id="435591"/>
    <lineage>
        <taxon>Bacteria</taxon>
        <taxon>Pseudomonadati</taxon>
        <taxon>Bacteroidota</taxon>
        <taxon>Bacteroidia</taxon>
        <taxon>Bacteroidales</taxon>
        <taxon>Tannerellaceae</taxon>
        <taxon>Parabacteroides</taxon>
    </lineage>
</organism>
<keyword id="KW-0066">ATP synthesis</keyword>
<keyword id="KW-0997">Cell inner membrane</keyword>
<keyword id="KW-1003">Cell membrane</keyword>
<keyword id="KW-0139">CF(1)</keyword>
<keyword id="KW-0375">Hydrogen ion transport</keyword>
<keyword id="KW-0406">Ion transport</keyword>
<keyword id="KW-0472">Membrane</keyword>
<keyword id="KW-1185">Reference proteome</keyword>
<keyword id="KW-0813">Transport</keyword>